<gene>
    <name type="primary">pld</name>
    <name type="ordered locus">RT0807</name>
</gene>
<dbReference type="EC" id="3.1.4.4"/>
<dbReference type="EMBL" id="AE017197">
    <property type="protein sequence ID" value="AAU04262.1"/>
    <property type="molecule type" value="Genomic_DNA"/>
</dbReference>
<dbReference type="RefSeq" id="WP_011191236.1">
    <property type="nucleotide sequence ID" value="NC_006142.1"/>
</dbReference>
<dbReference type="SMR" id="Q68VT0"/>
<dbReference type="KEGG" id="rty:RT0807"/>
<dbReference type="eggNOG" id="COG1502">
    <property type="taxonomic scope" value="Bacteria"/>
</dbReference>
<dbReference type="HOGENOM" id="CLU_080814_3_0_5"/>
<dbReference type="OrthoDB" id="9762009at2"/>
<dbReference type="Proteomes" id="UP000000604">
    <property type="component" value="Chromosome"/>
</dbReference>
<dbReference type="GO" id="GO:0005576">
    <property type="term" value="C:extracellular region"/>
    <property type="evidence" value="ECO:0007669"/>
    <property type="project" value="UniProtKB-SubCell"/>
</dbReference>
<dbReference type="GO" id="GO:0004630">
    <property type="term" value="F:phospholipase D activity"/>
    <property type="evidence" value="ECO:0007669"/>
    <property type="project" value="UniProtKB-EC"/>
</dbReference>
<dbReference type="GO" id="GO:0016891">
    <property type="term" value="F:RNA endonuclease activity, producing 5'-phosphomonoesters"/>
    <property type="evidence" value="ECO:0007669"/>
    <property type="project" value="TreeGrafter"/>
</dbReference>
<dbReference type="GO" id="GO:0016042">
    <property type="term" value="P:lipid catabolic process"/>
    <property type="evidence" value="ECO:0007669"/>
    <property type="project" value="UniProtKB-KW"/>
</dbReference>
<dbReference type="GO" id="GO:0006793">
    <property type="term" value="P:phosphorus metabolic process"/>
    <property type="evidence" value="ECO:0007669"/>
    <property type="project" value="UniProtKB-ARBA"/>
</dbReference>
<dbReference type="CDD" id="cd09170">
    <property type="entry name" value="PLDc_Nuc"/>
    <property type="match status" value="1"/>
</dbReference>
<dbReference type="Gene3D" id="3.30.870.10">
    <property type="entry name" value="Endonuclease Chain A"/>
    <property type="match status" value="1"/>
</dbReference>
<dbReference type="InterPro" id="IPR025202">
    <property type="entry name" value="PLD-like_dom"/>
</dbReference>
<dbReference type="InterPro" id="IPR051406">
    <property type="entry name" value="PLD_domain"/>
</dbReference>
<dbReference type="InterPro" id="IPR001736">
    <property type="entry name" value="PLipase_D/transphosphatidylase"/>
</dbReference>
<dbReference type="PANTHER" id="PTHR43856">
    <property type="entry name" value="CARDIOLIPIN HYDROLASE"/>
    <property type="match status" value="1"/>
</dbReference>
<dbReference type="PANTHER" id="PTHR43856:SF1">
    <property type="entry name" value="MITOCHONDRIAL CARDIOLIPIN HYDROLASE"/>
    <property type="match status" value="1"/>
</dbReference>
<dbReference type="Pfam" id="PF13091">
    <property type="entry name" value="PLDc_2"/>
    <property type="match status" value="1"/>
</dbReference>
<dbReference type="SMART" id="SM00155">
    <property type="entry name" value="PLDc"/>
    <property type="match status" value="1"/>
</dbReference>
<dbReference type="SUPFAM" id="SSF56024">
    <property type="entry name" value="Phospholipase D/nuclease"/>
    <property type="match status" value="1"/>
</dbReference>
<dbReference type="PROSITE" id="PS50035">
    <property type="entry name" value="PLD"/>
    <property type="match status" value="1"/>
</dbReference>
<name>PLD_RICTY</name>
<accession>Q68VT0</accession>
<organism>
    <name type="scientific">Rickettsia typhi (strain ATCC VR-144 / Wilmington)</name>
    <dbReference type="NCBI Taxonomy" id="257363"/>
    <lineage>
        <taxon>Bacteria</taxon>
        <taxon>Pseudomonadati</taxon>
        <taxon>Pseudomonadota</taxon>
        <taxon>Alphaproteobacteria</taxon>
        <taxon>Rickettsiales</taxon>
        <taxon>Rickettsiaceae</taxon>
        <taxon>Rickettsieae</taxon>
        <taxon>Rickettsia</taxon>
        <taxon>typhus group</taxon>
    </lineage>
</organism>
<comment type="function">
    <text evidence="1">Could be a virulence factor.</text>
</comment>
<comment type="catalytic activity">
    <reaction>
        <text>a 1,2-diacyl-sn-glycero-3-phosphocholine + H2O = a 1,2-diacyl-sn-glycero-3-phosphate + choline + H(+)</text>
        <dbReference type="Rhea" id="RHEA:14445"/>
        <dbReference type="ChEBI" id="CHEBI:15354"/>
        <dbReference type="ChEBI" id="CHEBI:15377"/>
        <dbReference type="ChEBI" id="CHEBI:15378"/>
        <dbReference type="ChEBI" id="CHEBI:57643"/>
        <dbReference type="ChEBI" id="CHEBI:58608"/>
        <dbReference type="EC" id="3.1.4.4"/>
    </reaction>
</comment>
<comment type="subunit">
    <text evidence="1">Homodimer.</text>
</comment>
<comment type="subcellular location">
    <subcellularLocation>
        <location evidence="4">Secreted</location>
    </subcellularLocation>
</comment>
<comment type="similarity">
    <text evidence="4">Belongs to the phospholipase D family.</text>
</comment>
<reference key="1">
    <citation type="journal article" date="2004" name="J. Bacteriol.">
        <title>Complete genome sequence of Rickettsia typhi and comparison with sequences of other Rickettsiae.</title>
        <authorList>
            <person name="McLeod M.P."/>
            <person name="Qin X."/>
            <person name="Karpathy S.E."/>
            <person name="Gioia J."/>
            <person name="Highlander S.K."/>
            <person name="Fox G.E."/>
            <person name="McNeill T.Z."/>
            <person name="Jiang H."/>
            <person name="Muzny D."/>
            <person name="Jacob L.S."/>
            <person name="Hawes A.C."/>
            <person name="Sodergren E."/>
            <person name="Gill R."/>
            <person name="Hume J."/>
            <person name="Morgan M."/>
            <person name="Fan G."/>
            <person name="Amin A.G."/>
            <person name="Gibbs R.A."/>
            <person name="Hong C."/>
            <person name="Yu X.-J."/>
            <person name="Walker D.H."/>
            <person name="Weinstock G.M."/>
        </authorList>
    </citation>
    <scope>NUCLEOTIDE SEQUENCE [LARGE SCALE GENOMIC DNA]</scope>
    <source>
        <strain>ATCC VR-144 / Wilmington</strain>
    </source>
</reference>
<evidence type="ECO:0000250" key="1"/>
<evidence type="ECO:0000255" key="2"/>
<evidence type="ECO:0000255" key="3">
    <source>
        <dbReference type="PROSITE-ProRule" id="PRU00153"/>
    </source>
</evidence>
<evidence type="ECO:0000305" key="4"/>
<protein>
    <recommendedName>
        <fullName>Phospholipase D</fullName>
        <shortName>PLD</shortName>
        <ecNumber>3.1.4.4</ecNumber>
    </recommendedName>
    <alternativeName>
        <fullName>Choline phosphatase</fullName>
    </alternativeName>
</protein>
<feature type="signal peptide" evidence="2">
    <location>
        <begin position="1"/>
        <end position="22"/>
    </location>
</feature>
<feature type="chain" id="PRO_0000274785" description="Phospholipase D">
    <location>
        <begin position="23"/>
        <end position="204"/>
    </location>
</feature>
<feature type="domain" description="PLD phosphodiesterase" evidence="3">
    <location>
        <begin position="142"/>
        <end position="169"/>
    </location>
</feature>
<feature type="active site" evidence="3">
    <location>
        <position position="147"/>
    </location>
</feature>
<feature type="active site" evidence="3">
    <location>
        <position position="149"/>
    </location>
</feature>
<feature type="active site" evidence="3">
    <location>
        <position position="154"/>
    </location>
</feature>
<proteinExistence type="inferred from homology"/>
<keyword id="KW-0378">Hydrolase</keyword>
<keyword id="KW-0442">Lipid degradation</keyword>
<keyword id="KW-0443">Lipid metabolism</keyword>
<keyword id="KW-0964">Secreted</keyword>
<keyword id="KW-0732">Signal</keyword>
<keyword id="KW-0843">Virulence</keyword>
<sequence length="204" mass="23027">MKSKNNKFIAMSIPFILGTALGIYVESTYYFTSIINQKSFALPDTQIKHYSIPELSRRNVSTCFTPPAGCTKFIVQQLEKAEESIYMQAYGMSDSLITTALINAQMRGVKVKILLDRSNLKQKFSKLYELQQAKIDVGIDTVPGIAHNKVIIIDKKKVITGSFNFTVAADKRNAENVILIEDQQLAESYLQNWFSRKASNSVHF</sequence>